<protein>
    <recommendedName>
        <fullName>Gag polyprotein</fullName>
    </recommendedName>
    <alternativeName>
        <fullName>Pr55Gag</fullName>
    </alternativeName>
    <component>
        <recommendedName>
            <fullName>Matrix protein p17</fullName>
            <shortName>MA</shortName>
        </recommendedName>
    </component>
    <component>
        <recommendedName>
            <fullName>Capsid protein p24</fullName>
            <shortName>CA</shortName>
        </recommendedName>
    </component>
    <component>
        <recommendedName>
            <fullName evidence="6">Spacer peptide 1</fullName>
            <shortName>SP1</shortName>
        </recommendedName>
        <alternativeName>
            <fullName>p2</fullName>
        </alternativeName>
    </component>
    <component>
        <recommendedName>
            <fullName>Nucleocapsid protein p7</fullName>
            <shortName>NC</shortName>
        </recommendedName>
    </component>
    <component>
        <recommendedName>
            <fullName evidence="6">Spacer peptide 2</fullName>
            <shortName>SP2</shortName>
        </recommendedName>
        <alternativeName>
            <fullName>p1</fullName>
        </alternativeName>
    </component>
    <component>
        <recommendedName>
            <fullName>p6-gag</fullName>
        </recommendedName>
    </component>
</protein>
<accession>O89939</accession>
<keyword id="KW-0014">AIDS</keyword>
<keyword id="KW-0167">Capsid protein</keyword>
<keyword id="KW-1032">Host cell membrane</keyword>
<keyword id="KW-1035">Host cytoplasm</keyword>
<keyword id="KW-1039">Host endosome</keyword>
<keyword id="KW-1043">Host membrane</keyword>
<keyword id="KW-1048">Host nucleus</keyword>
<keyword id="KW-0945">Host-virus interaction</keyword>
<keyword id="KW-0449">Lipoprotein</keyword>
<keyword id="KW-0472">Membrane</keyword>
<keyword id="KW-0479">Metal-binding</keyword>
<keyword id="KW-0488">Methylation</keyword>
<keyword id="KW-0519">Myristate</keyword>
<keyword id="KW-0597">Phosphoprotein</keyword>
<keyword id="KW-0677">Repeat</keyword>
<keyword id="KW-0688">Ribosomal frameshifting</keyword>
<keyword id="KW-0694">RNA-binding</keyword>
<keyword id="KW-1198">Viral budding</keyword>
<keyword id="KW-1187">Viral budding via the host ESCRT complexes</keyword>
<keyword id="KW-0543">Viral nucleoprotein</keyword>
<keyword id="KW-1188">Viral release from host cell</keyword>
<keyword id="KW-0946">Virion</keyword>
<keyword id="KW-0862">Zinc</keyword>
<keyword id="KW-0863">Zinc-finger</keyword>
<feature type="initiator methionine" description="Removed; by host" evidence="1">
    <location>
        <position position="1"/>
    </location>
</feature>
<feature type="chain" id="PRO_0000261229" description="Gag polyprotein">
    <location>
        <begin position="2"/>
        <end position="495"/>
    </location>
</feature>
<feature type="chain" id="PRO_0000246392" description="Matrix protein p17" evidence="1">
    <location>
        <begin position="2"/>
        <end position="132"/>
    </location>
</feature>
<feature type="chain" id="PRO_0000246393" description="Capsid protein p24" evidence="1">
    <location>
        <begin position="133"/>
        <end position="363"/>
    </location>
</feature>
<feature type="peptide" id="PRO_0000246394" description="Spacer peptide 1" evidence="1">
    <location>
        <begin position="364"/>
        <end position="378"/>
    </location>
</feature>
<feature type="chain" id="PRO_0000246395" description="Nucleocapsid protein p7" evidence="1">
    <location>
        <begin position="379"/>
        <end position="433"/>
    </location>
</feature>
<feature type="peptide" id="PRO_0000246396" description="Spacer peptide 2" evidence="1">
    <location>
        <begin position="434"/>
        <end position="449"/>
    </location>
</feature>
<feature type="chain" id="PRO_0000246397" description="p6-gag" evidence="1">
    <location>
        <begin position="450"/>
        <end position="495"/>
    </location>
</feature>
<feature type="zinc finger region" description="CCHC-type 1" evidence="8">
    <location>
        <begin position="391"/>
        <end position="408"/>
    </location>
</feature>
<feature type="zinc finger region" description="CCHC-type 2" evidence="8">
    <location>
        <begin position="412"/>
        <end position="429"/>
    </location>
</feature>
<feature type="region of interest" description="Interaction with Gp41" evidence="6">
    <location>
        <begin position="7"/>
        <end position="31"/>
    </location>
</feature>
<feature type="region of interest" description="Interaction with host CALM1" evidence="5">
    <location>
        <begin position="8"/>
        <end position="43"/>
    </location>
</feature>
<feature type="region of interest" description="Interaction with host AP3D1" evidence="7">
    <location>
        <begin position="12"/>
        <end position="19"/>
    </location>
</feature>
<feature type="region of interest" description="Interaction with membrane phosphatidylinositol 4,5-bisphosphate and RNA" evidence="6">
    <location>
        <begin position="14"/>
        <end position="33"/>
    </location>
</feature>
<feature type="region of interest" description="Interaction with membrane phosphatidylinositol 4,5-bisphosphate" evidence="6">
    <location>
        <begin position="73"/>
        <end position="77"/>
    </location>
</feature>
<feature type="region of interest" description="Interaction with host PPIA/CYPA and NUP153" evidence="6">
    <location>
        <begin position="189"/>
        <end position="227"/>
    </location>
</feature>
<feature type="region of interest" description="PPIA/CYPA-binding loop" evidence="5">
    <location>
        <begin position="217"/>
        <end position="225"/>
    </location>
</feature>
<feature type="region of interest" description="Dimerization/Multimerization of capsid protein p24" evidence="5">
    <location>
        <begin position="277"/>
        <end position="363"/>
    </location>
</feature>
<feature type="region of interest" description="Disordered" evidence="9">
    <location>
        <begin position="438"/>
        <end position="495"/>
    </location>
</feature>
<feature type="short sequence motif" description="Nuclear export signal" evidence="1">
    <location>
        <begin position="16"/>
        <end position="22"/>
    </location>
</feature>
<feature type="short sequence motif" description="Nuclear localization signal" evidence="1">
    <location>
        <begin position="26"/>
        <end position="32"/>
    </location>
</feature>
<feature type="short sequence motif" description="PTAP/PSAP motif">
    <location>
        <begin position="456"/>
        <end position="459"/>
    </location>
</feature>
<feature type="short sequence motif" description="LYPX(n)L motif">
    <location>
        <begin position="483"/>
        <end position="490"/>
    </location>
</feature>
<feature type="site" description="Cleavage; by viral protease" evidence="1">
    <location>
        <begin position="132"/>
        <end position="133"/>
    </location>
</feature>
<feature type="site" description="Cleavage; by viral protease" evidence="1">
    <location>
        <begin position="363"/>
        <end position="364"/>
    </location>
</feature>
<feature type="site" description="Cleavage; by viral protease" evidence="1">
    <location>
        <begin position="378"/>
        <end position="379"/>
    </location>
</feature>
<feature type="site" description="Cleavage; by viral protease" evidence="1">
    <location>
        <begin position="433"/>
        <end position="434"/>
    </location>
</feature>
<feature type="site" description="Cleavage; by viral protease" evidence="1">
    <location>
        <begin position="449"/>
        <end position="450"/>
    </location>
</feature>
<feature type="modified residue" description="Asymmetric dimethylarginine; in Nucleocapsid protein p7; by host PRMT6" evidence="1">
    <location>
        <position position="388"/>
    </location>
</feature>
<feature type="modified residue" description="Asymmetric dimethylarginine; in Nucleocapsid protein p7; by host PRMT6" evidence="1">
    <location>
        <position position="410"/>
    </location>
</feature>
<feature type="lipid moiety-binding region" description="N-myristoyl glycine; by host" evidence="1">
    <location>
        <position position="2"/>
    </location>
</feature>
<organism>
    <name type="scientific">Human immunodeficiency virus type 1 group M subtype G (isolate SE6165)</name>
    <name type="common">HIV-1</name>
    <dbReference type="NCBI Taxonomy" id="388824"/>
    <lineage>
        <taxon>Viruses</taxon>
        <taxon>Riboviria</taxon>
        <taxon>Pararnavirae</taxon>
        <taxon>Artverviricota</taxon>
        <taxon>Revtraviricetes</taxon>
        <taxon>Ortervirales</taxon>
        <taxon>Retroviridae</taxon>
        <taxon>Orthoretrovirinae</taxon>
        <taxon>Lentivirus</taxon>
        <taxon>Human immunodeficiency virus type 1</taxon>
    </lineage>
</organism>
<reference key="1">
    <citation type="journal article" date="1998" name="Virology">
        <title>Full genome sequences of human immunodeficiency virus type 1 subtypes G and A/G intersubtype recombinants.</title>
        <authorList>
            <person name="Carr J.K."/>
            <person name="Salminen M.O."/>
            <person name="Albert J."/>
            <person name="Sanders-Buell E."/>
            <person name="Gotte D."/>
            <person name="Birx D.L."/>
            <person name="McCutchan F.E."/>
        </authorList>
    </citation>
    <scope>NUCLEOTIDE SEQUENCE [GENOMIC DNA]</scope>
</reference>
<comment type="function">
    <molecule>Gag polyprotein</molecule>
    <text evidence="5">Mediates, with Gag-Pol polyprotein, the essential events in virion assembly, including binding the plasma membrane, making the protein-protein interactions necessary to create spherical particles, recruiting the viral Env proteins, and packaging the genomic RNA via direct interactions with the RNA packaging sequence (Psi).</text>
</comment>
<comment type="function">
    <molecule>Matrix protein p17</molecule>
    <text evidence="1 6">Targets the polyprotein to the plasma membrane via a multipartite membrane-binding signal, that includes its myristoylated N-terminus (By similarity). Matrix protein is part of the pre-integration complex. Implicated in the release from host cell mediated by Vpu. Binds to RNA (By similarity).</text>
</comment>
<comment type="function">
    <molecule>Capsid protein p24</molecule>
    <text evidence="5 6">Forms the conical core that encapsulates the genomic RNA-nucleocapsid complex in the virion. Most core are conical, with only 7% tubular. The core is constituted by capsid protein hexamer subunits. The core is disassembled soon after virion entry (By similarity). The capsid promotes immune invasion by cloaking viral DNA from CGAS detection (By similarity). Host restriction factors such as TRIM5-alpha or TRIMCyp bind retroviral capsids and cause premature capsid disassembly, leading to blocks in reverse transcription. Capsid restriction by TRIM5 is one of the factors which restricts HIV-1 to the human species. Host PIN1 apparently facilitates the virion uncoating (By similarity). On the other hand, interactions with PDZD8 or CYPA stabilize the capsid (By similarity).</text>
</comment>
<comment type="function">
    <molecule>Nucleocapsid protein p7</molecule>
    <text evidence="5">Encapsulates and protects viral dimeric unspliced genomic RNA (gRNA). Binds these RNAs through its zinc fingers. Acts as a nucleic acid chaperone which is involved in rearangement of nucleic acid secondary structure during gRNA retrotranscription. Also facilitates template switch leading to recombination. As part of the polyprotein, participates in gRNA dimerization, packaging, tRNA incorporation and virion assembly.</text>
</comment>
<comment type="function">
    <molecule>p6-gag</molecule>
    <text evidence="6">Plays a role in budding of the assembled particle by interacting with the host class E VPS proteins TSG101 and PDCD6IP/AIP1.</text>
</comment>
<comment type="subunit">
    <molecule>Gag polyprotein</molecule>
    <text evidence="4 5">Homotrimer; further assembles as hexamers of trimers. Oligomerization possibly creates a central hole into which the cytoplasmic tail of the gp41 envelope protein may be inserted. Interacts with host TRIM22; this interaction seems to disrupt proper trafficking of Gag polyprotein and may interfere with budding. Interacts with host PDZD8. When ubiquitinated, interacts (via p6-gag domain) with host PACSIN2; this interaction allows PACSIN2 recruitment to viral assembly sites and its subsequent incorporation into virions. Interacts with MOV10 (By similarity).</text>
</comment>
<comment type="subunit">
    <molecule>Matrix protein p17</molecule>
    <text evidence="5 6">Homotrimer; further assembles as hexamers of trimers. Interacts with gp41 (via C-terminus). Interacts with host CALM1; this interaction induces a conformational change in the Matrix protein, triggering exposure of the myristate group. Interacts with host AP3D1; this interaction allows the polyprotein trafficking to multivesicular bodies during virus assembly. Part of the pre-integration complex (PIC) which is composed of viral genome, matrix protein, Vpr and integrase.</text>
</comment>
<comment type="subunit">
    <molecule>Capsid protein p24</molecule>
    <text evidence="5 6">Homodimer; the homodimer further multimerizes as homohexamers or homopentamers (By similarity). Interacts with host NUP98 (By similarity). Interacts with host PPIA/CYPA; this interaction stabilizes the capsid (By similarity). Interacts with host NUP153 (By similarity). Interacts with host PDZD8; this interaction stabilizes the capsid. Interacts with host TRIM5; this interaction destabilizes the capsid (By similarity). Interacts with host CPSF6 (By similarity). Interacts with host NONO; the interaction is weak (By similarity).</text>
</comment>
<comment type="subunit">
    <molecule>Nucleocapsid protein p7</molecule>
    <text evidence="6">Interacts with host NUP98.</text>
</comment>
<comment type="subunit">
    <molecule>p6-gag</molecule>
    <text evidence="3 6">Interacts with Vpr; this interaction allows Vpr incorporation into the virion. Interacts with host TSG101. p6-gag interacts with host PDCD6IP/AIP1.</text>
</comment>
<comment type="subcellular location">
    <molecule>Gag polyprotein</molecule>
    <subcellularLocation>
        <location evidence="6">Host cell membrane</location>
        <topology evidence="6">Lipid-anchor</topology>
    </subcellularLocation>
    <subcellularLocation>
        <location evidence="6">Host endosome</location>
        <location evidence="6">Host multivesicular body</location>
    </subcellularLocation>
    <text evidence="6">These locations are probably linked to virus assembly sites. The main location is the cell membrane, but under some circumstances, late endosomal compartments can serve as productive sites for virion assembly.</text>
</comment>
<comment type="subcellular location">
    <molecule>Matrix protein p17</molecule>
    <subcellularLocation>
        <location evidence="6">Virion membrane</location>
        <topology evidence="6">Lipid-anchor</topology>
    </subcellularLocation>
    <subcellularLocation>
        <location evidence="1">Host nucleus</location>
    </subcellularLocation>
    <subcellularLocation>
        <location evidence="1">Host cytoplasm</location>
    </subcellularLocation>
</comment>
<comment type="subcellular location">
    <molecule>Capsid protein p24</molecule>
    <subcellularLocation>
        <location evidence="6">Virion</location>
    </subcellularLocation>
</comment>
<comment type="subcellular location">
    <molecule>Nucleocapsid protein p7</molecule>
    <subcellularLocation>
        <location evidence="6">Virion</location>
    </subcellularLocation>
</comment>
<comment type="alternative products">
    <event type="ribosomal frameshifting"/>
    <isoform>
        <id>O89939-1</id>
        <name>Gag polyprotein</name>
        <sequence type="displayed"/>
    </isoform>
    <isoform>
        <id>O89940-1</id>
        <name>Gag-Pol polyprotein</name>
        <sequence type="external"/>
    </isoform>
    <text>Translation results in the formation of the Gag polyprotein most of the time. Ribosomal frameshifting at the gag-pol genes boundary occurs at low frequency and produces the Gag-Pol polyprotein. This strategy of translation probably allows the virus to modulate the quantity of each viral protein. Maintenance of a correct Gag to Gag-Pol ratio is essential for RNA dimerization and viral infectivity.</text>
</comment>
<comment type="domain">
    <text evidence="6">Late-budding domains (L domains) are short sequence motifs essential for viral particle budding. They recruit proteins of the host ESCRT machinery (Endosomal Sorting Complex Required for Transport) or ESCRT-associated proteins. p6-gag contains two L domains: a PTAP/PSAP motif, which interacts with the UEV domain of TSG101 and a LYPX(n)L motif which interacts with PDCD6IP/AIP1.</text>
</comment>
<comment type="PTM">
    <text evidence="6">Gag-Pol polyprotein: Specific enzymatic cleavages by the viral protease yield mature proteins.</text>
</comment>
<comment type="PTM">
    <molecule>Matrix protein p17</molecule>
    <text evidence="5">Tyrosine phosphorylated presumably in the virion by a host kinase. Phosphorylation is apparently not a major regulator of membrane association.</text>
</comment>
<comment type="PTM">
    <text evidence="6">Capsid protein p24 is phosphorylated possibly by host MAPK1; this phosphorylation is necessary for Pin1-mediated virion uncoating.</text>
</comment>
<comment type="PTM">
    <text evidence="2">Nucleocapsid protein p7 is methylated by host PRMT6, impairing its function by reducing RNA annealing and the initiation of reverse transcription.</text>
</comment>
<comment type="miscellaneous">
    <text>HIV-1 lineages are divided in three main groups, M (for Major), O (for Outlier), and N (for New, or Non-M, Non-O). The vast majority of strains found worldwide belong to the group M. Group O seems to be endemic to and largely confined to Cameroon and neighboring countries in West Central Africa, where these viruses represent a small minority of HIV-1 strains. The group N is represented by a limited number of isolates from Cameroonian persons. The group M is further subdivided in 9 clades or subtypes (A to D, F to H, J and K).</text>
</comment>
<comment type="miscellaneous">
    <molecule>Isoform Gag polyprotein</molecule>
    <text>Produced by conventional translation.</text>
</comment>
<comment type="similarity">
    <text evidence="10">Belongs to the primate lentivirus group gag polyprotein family.</text>
</comment>
<proteinExistence type="inferred from homology"/>
<name>GAG_HV1SE</name>
<organismHost>
    <name type="scientific">Homo sapiens</name>
    <name type="common">Human</name>
    <dbReference type="NCBI Taxonomy" id="9606"/>
</organismHost>
<sequence length="495" mass="55128">MGARASVLTGGKLDAWEKIRLRPGGRKSYKIKHLVWASRELERFALNPDLLETAEGCQQIMRQLQPSLQTGTEEIKSLYNAVATLYCVHQRIEVKDTKEALEEVEKIQKKSQEKIQQAAMDKGNSNQVSQNYPIVQNAQGQMVHQAITPRTLNAWVKVVEEKAFSPEVIPMFSALSEGATPQDLNLMLNTVGGHQAAMQMLKDTINEEAAEWDRMHPQQAGPFPPGQIREPRGSDIAGTTSSLQEQITWMTGNPPIPVGEIYKRWIILGLNKIVRMYSPVSILDIRQGPKEPFRDYVDRFFKCLRAEQASQDVKGWMTDTLLVQNANPDCKTILRALGQGASLEEMMTACQGVGGPSHKARVLAEAMSQASGAAAAIMMQRSNFKGPRRTIKCFNCGKEGHLARNCRAPRKKGCWKCGKEGHQMKDCTERQANFLGKIWPSNKGRPGNFLQNRTEPTAPPAESLGFGEEIAPSPKQEMKEKELYPSLKSLFGSDP</sequence>
<gene>
    <name type="primary">gag</name>
</gene>
<dbReference type="EMBL" id="AF061642">
    <property type="protein sequence ID" value="AAC29059.1"/>
    <property type="molecule type" value="Genomic_DNA"/>
</dbReference>
<dbReference type="BMRB" id="O89939"/>
<dbReference type="SMR" id="O89939"/>
<dbReference type="PRO" id="PR:O89939"/>
<dbReference type="Proteomes" id="UP000135013">
    <property type="component" value="Segment"/>
</dbReference>
<dbReference type="GO" id="GO:0042025">
    <property type="term" value="C:host cell nucleus"/>
    <property type="evidence" value="ECO:0007669"/>
    <property type="project" value="UniProtKB-SubCell"/>
</dbReference>
<dbReference type="GO" id="GO:0020002">
    <property type="term" value="C:host cell plasma membrane"/>
    <property type="evidence" value="ECO:0007669"/>
    <property type="project" value="UniProtKB-SubCell"/>
</dbReference>
<dbReference type="GO" id="GO:0072494">
    <property type="term" value="C:host multivesicular body"/>
    <property type="evidence" value="ECO:0007669"/>
    <property type="project" value="UniProtKB-SubCell"/>
</dbReference>
<dbReference type="GO" id="GO:0016020">
    <property type="term" value="C:membrane"/>
    <property type="evidence" value="ECO:0007669"/>
    <property type="project" value="UniProtKB-KW"/>
</dbReference>
<dbReference type="GO" id="GO:0019013">
    <property type="term" value="C:viral nucleocapsid"/>
    <property type="evidence" value="ECO:0007669"/>
    <property type="project" value="UniProtKB-KW"/>
</dbReference>
<dbReference type="GO" id="GO:0055036">
    <property type="term" value="C:virion membrane"/>
    <property type="evidence" value="ECO:0007669"/>
    <property type="project" value="UniProtKB-SubCell"/>
</dbReference>
<dbReference type="GO" id="GO:0003723">
    <property type="term" value="F:RNA binding"/>
    <property type="evidence" value="ECO:0007669"/>
    <property type="project" value="UniProtKB-KW"/>
</dbReference>
<dbReference type="GO" id="GO:0005198">
    <property type="term" value="F:structural molecule activity"/>
    <property type="evidence" value="ECO:0007669"/>
    <property type="project" value="InterPro"/>
</dbReference>
<dbReference type="GO" id="GO:0008270">
    <property type="term" value="F:zinc ion binding"/>
    <property type="evidence" value="ECO:0007669"/>
    <property type="project" value="UniProtKB-KW"/>
</dbReference>
<dbReference type="GO" id="GO:0039702">
    <property type="term" value="P:viral budding via host ESCRT complex"/>
    <property type="evidence" value="ECO:0007669"/>
    <property type="project" value="UniProtKB-KW"/>
</dbReference>
<dbReference type="GO" id="GO:0075523">
    <property type="term" value="P:viral translational frameshifting"/>
    <property type="evidence" value="ECO:0007669"/>
    <property type="project" value="UniProtKB-KW"/>
</dbReference>
<dbReference type="FunFam" id="1.10.1200.30:FF:000001">
    <property type="entry name" value="Gag polyprotein"/>
    <property type="match status" value="1"/>
</dbReference>
<dbReference type="FunFam" id="1.10.375.10:FF:000001">
    <property type="entry name" value="Gag polyprotein"/>
    <property type="match status" value="1"/>
</dbReference>
<dbReference type="FunFam" id="4.10.60.10:FF:000001">
    <property type="entry name" value="Gag polyprotein"/>
    <property type="match status" value="1"/>
</dbReference>
<dbReference type="Gene3D" id="1.10.1200.30">
    <property type="match status" value="1"/>
</dbReference>
<dbReference type="Gene3D" id="6.10.250.390">
    <property type="match status" value="1"/>
</dbReference>
<dbReference type="Gene3D" id="1.10.375.10">
    <property type="entry name" value="Human Immunodeficiency Virus Type 1 Capsid Protein"/>
    <property type="match status" value="1"/>
</dbReference>
<dbReference type="Gene3D" id="1.10.150.90">
    <property type="entry name" value="Immunodeficiency lentiviruses, gag gene matrix protein p17"/>
    <property type="match status" value="1"/>
</dbReference>
<dbReference type="Gene3D" id="1.20.5.760">
    <property type="entry name" value="Single helix bin"/>
    <property type="match status" value="1"/>
</dbReference>
<dbReference type="Gene3D" id="4.10.60.10">
    <property type="entry name" value="Zinc finger, CCHC-type"/>
    <property type="match status" value="1"/>
</dbReference>
<dbReference type="InterPro" id="IPR045345">
    <property type="entry name" value="Gag_p24_C"/>
</dbReference>
<dbReference type="InterPro" id="IPR014817">
    <property type="entry name" value="Gag_p6"/>
</dbReference>
<dbReference type="InterPro" id="IPR000071">
    <property type="entry name" value="Lentvrl_matrix_N"/>
</dbReference>
<dbReference type="InterPro" id="IPR012344">
    <property type="entry name" value="Matrix_HIV/RSV_N"/>
</dbReference>
<dbReference type="InterPro" id="IPR050195">
    <property type="entry name" value="Primate_lentivir_Gag_pol-like"/>
</dbReference>
<dbReference type="InterPro" id="IPR008916">
    <property type="entry name" value="Retrov_capsid_C"/>
</dbReference>
<dbReference type="InterPro" id="IPR008919">
    <property type="entry name" value="Retrov_capsid_N"/>
</dbReference>
<dbReference type="InterPro" id="IPR010999">
    <property type="entry name" value="Retrovr_matrix"/>
</dbReference>
<dbReference type="InterPro" id="IPR001878">
    <property type="entry name" value="Znf_CCHC"/>
</dbReference>
<dbReference type="InterPro" id="IPR036875">
    <property type="entry name" value="Znf_CCHC_sf"/>
</dbReference>
<dbReference type="PANTHER" id="PTHR40389:SF4">
    <property type="match status" value="1"/>
</dbReference>
<dbReference type="PANTHER" id="PTHR40389">
    <property type="entry name" value="ENDOGENOUS RETROVIRUS GROUP K MEMBER 24 GAG POLYPROTEIN-RELATED"/>
    <property type="match status" value="1"/>
</dbReference>
<dbReference type="Pfam" id="PF00540">
    <property type="entry name" value="Gag_p17"/>
    <property type="match status" value="1"/>
</dbReference>
<dbReference type="Pfam" id="PF19317">
    <property type="entry name" value="Gag_p24_C"/>
    <property type="match status" value="1"/>
</dbReference>
<dbReference type="Pfam" id="PF08705">
    <property type="entry name" value="Gag_p6"/>
    <property type="match status" value="1"/>
</dbReference>
<dbReference type="Pfam" id="PF00098">
    <property type="entry name" value="zf-CCHC"/>
    <property type="match status" value="2"/>
</dbReference>
<dbReference type="PRINTS" id="PR00234">
    <property type="entry name" value="HIV1MATRIX"/>
</dbReference>
<dbReference type="SMART" id="SM00343">
    <property type="entry name" value="ZnF_C2HC"/>
    <property type="match status" value="2"/>
</dbReference>
<dbReference type="SUPFAM" id="SSF47836">
    <property type="entry name" value="Retroviral matrix proteins"/>
    <property type="match status" value="1"/>
</dbReference>
<dbReference type="SUPFAM" id="SSF47353">
    <property type="entry name" value="Retrovirus capsid dimerization domain-like"/>
    <property type="match status" value="1"/>
</dbReference>
<dbReference type="SUPFAM" id="SSF47943">
    <property type="entry name" value="Retrovirus capsid protein, N-terminal core domain"/>
    <property type="match status" value="1"/>
</dbReference>
<dbReference type="SUPFAM" id="SSF57756">
    <property type="entry name" value="Retrovirus zinc finger-like domains"/>
    <property type="match status" value="1"/>
</dbReference>
<dbReference type="PROSITE" id="PS50158">
    <property type="entry name" value="ZF_CCHC"/>
    <property type="match status" value="2"/>
</dbReference>
<evidence type="ECO:0000250" key="1"/>
<evidence type="ECO:0000250" key="2">
    <source>
        <dbReference type="UniProtKB" id="P03347"/>
    </source>
</evidence>
<evidence type="ECO:0000250" key="3">
    <source>
        <dbReference type="UniProtKB" id="P03348"/>
    </source>
</evidence>
<evidence type="ECO:0000250" key="4">
    <source>
        <dbReference type="UniProtKB" id="P03349"/>
    </source>
</evidence>
<evidence type="ECO:0000250" key="5">
    <source>
        <dbReference type="UniProtKB" id="P04591"/>
    </source>
</evidence>
<evidence type="ECO:0000250" key="6">
    <source>
        <dbReference type="UniProtKB" id="P12493"/>
    </source>
</evidence>
<evidence type="ECO:0000250" key="7">
    <source>
        <dbReference type="UniProtKB" id="P12497"/>
    </source>
</evidence>
<evidence type="ECO:0000255" key="8">
    <source>
        <dbReference type="PROSITE-ProRule" id="PRU00047"/>
    </source>
</evidence>
<evidence type="ECO:0000256" key="9">
    <source>
        <dbReference type="SAM" id="MobiDB-lite"/>
    </source>
</evidence>
<evidence type="ECO:0000305" key="10"/>